<protein>
    <recommendedName>
        <fullName evidence="7">Dimethylsulfoniopropionate lyase DddP</fullName>
        <shortName>DMSP lyase</shortName>
        <ecNumber evidence="4">4.4.1.3</ecNumber>
    </recommendedName>
</protein>
<proteinExistence type="evidence at protein level"/>
<accession>A3SK19</accession>
<dbReference type="EC" id="4.4.1.3" evidence="4"/>
<dbReference type="EMBL" id="AALY01000001">
    <property type="protein sequence ID" value="EAP77700.1"/>
    <property type="molecule type" value="Genomic_DNA"/>
</dbReference>
<dbReference type="RefSeq" id="WP_009813101.1">
    <property type="nucleotide sequence ID" value="NZ_CH724156.1"/>
</dbReference>
<dbReference type="SMR" id="A3SK19"/>
<dbReference type="STRING" id="89187.ISM_05385"/>
<dbReference type="KEGG" id="ag:EAP77700"/>
<dbReference type="eggNOG" id="COG0006">
    <property type="taxonomic scope" value="Bacteria"/>
</dbReference>
<dbReference type="HOGENOM" id="CLU_052604_0_0_5"/>
<dbReference type="OrthoDB" id="9803194at2"/>
<dbReference type="BioCyc" id="MetaCyc:MONOMER-15590"/>
<dbReference type="Proteomes" id="UP000005954">
    <property type="component" value="Unassembled WGS sequence"/>
</dbReference>
<dbReference type="GO" id="GO:0047869">
    <property type="term" value="F:dimethylpropiothetin dethiomethylase activity"/>
    <property type="evidence" value="ECO:0000314"/>
    <property type="project" value="UniProtKB"/>
</dbReference>
<dbReference type="GO" id="GO:0046872">
    <property type="term" value="F:metal ion binding"/>
    <property type="evidence" value="ECO:0007669"/>
    <property type="project" value="UniProtKB-KW"/>
</dbReference>
<dbReference type="GO" id="GO:0042803">
    <property type="term" value="F:protein homodimerization activity"/>
    <property type="evidence" value="ECO:0000314"/>
    <property type="project" value="UniProtKB"/>
</dbReference>
<dbReference type="CDD" id="cd01066">
    <property type="entry name" value="APP_MetAP"/>
    <property type="match status" value="1"/>
</dbReference>
<dbReference type="Gene3D" id="3.90.230.10">
    <property type="entry name" value="Creatinase/methionine aminopeptidase superfamily"/>
    <property type="match status" value="1"/>
</dbReference>
<dbReference type="Gene3D" id="3.40.350.10">
    <property type="entry name" value="Creatinase/prolidase N-terminal domain"/>
    <property type="match status" value="1"/>
</dbReference>
<dbReference type="InterPro" id="IPR029149">
    <property type="entry name" value="Creatin/AminoP/Spt16_N"/>
</dbReference>
<dbReference type="InterPro" id="IPR036005">
    <property type="entry name" value="Creatinase/aminopeptidase-like"/>
</dbReference>
<dbReference type="InterPro" id="IPR050020">
    <property type="entry name" value="DddP"/>
</dbReference>
<dbReference type="InterPro" id="IPR000994">
    <property type="entry name" value="Pept_M24"/>
</dbReference>
<dbReference type="InterPro" id="IPR050659">
    <property type="entry name" value="Peptidase_M24B"/>
</dbReference>
<dbReference type="NCBIfam" id="NF043017">
    <property type="entry name" value="DimsulpropLyDddP"/>
    <property type="match status" value="1"/>
</dbReference>
<dbReference type="PANTHER" id="PTHR46112">
    <property type="entry name" value="AMINOPEPTIDASE"/>
    <property type="match status" value="1"/>
</dbReference>
<dbReference type="PANTHER" id="PTHR46112:SF2">
    <property type="entry name" value="XAA-PRO AMINOPEPTIDASE P-RELATED"/>
    <property type="match status" value="1"/>
</dbReference>
<dbReference type="Pfam" id="PF00557">
    <property type="entry name" value="Peptidase_M24"/>
    <property type="match status" value="1"/>
</dbReference>
<dbReference type="SUPFAM" id="SSF55920">
    <property type="entry name" value="Creatinase/aminopeptidase"/>
    <property type="match status" value="1"/>
</dbReference>
<dbReference type="SUPFAM" id="SSF53092">
    <property type="entry name" value="Creatinase/prolidase N-terminal domain"/>
    <property type="match status" value="1"/>
</dbReference>
<keyword id="KW-0408">Iron</keyword>
<keyword id="KW-0456">Lyase</keyword>
<keyword id="KW-0479">Metal-binding</keyword>
<keyword id="KW-1185">Reference proteome</keyword>
<reference key="1">
    <citation type="submission" date="2005-12" db="EMBL/GenBank/DDBJ databases">
        <authorList>
            <person name="Moran M.A."/>
            <person name="Ferriera S."/>
            <person name="Johnson J."/>
            <person name="Kravitz S."/>
            <person name="Halpern A."/>
            <person name="Remington K."/>
            <person name="Beeson K."/>
            <person name="Tran B."/>
            <person name="Rogers Y.-H."/>
            <person name="Friedman R."/>
            <person name="Venter J.C."/>
        </authorList>
    </citation>
    <scope>NUCLEOTIDE SEQUENCE [LARGE SCALE GENOMIC DNA]</scope>
    <source>
        <strain>ATCC BAA-591 / DSM 15170 / ISM</strain>
    </source>
</reference>
<reference key="2">
    <citation type="journal article" date="2009" name="Environ. Microbiol.">
        <title>The dddP gene, encoding a novel enzyme that converts dimethylsulfoniopropionate into dimethyl sulfide, is widespread in ocean metagenomes and marine bacteria and also occurs in some Ascomycete fungi.</title>
        <authorList>
            <person name="Todd J.D."/>
            <person name="Curson A.R."/>
            <person name="Dupont C.L."/>
            <person name="Nicholson P."/>
            <person name="Johnston A.W."/>
        </authorList>
    </citation>
    <scope>FUNCTION</scope>
</reference>
<reference key="3">
    <citation type="journal article" date="2010" name="Microbiology">
        <title>The dddP gene of Roseovarius nubinhibens encodes a novel lyase that cleaves dimethylsulfoniopropionate into acrylate plus dimethyl sulfide.</title>
        <authorList>
            <person name="Kirkwood M."/>
            <person name="Le Brun N.E."/>
            <person name="Todd J.D."/>
            <person name="Johnston A.W."/>
        </authorList>
    </citation>
    <scope>FUNCTION</scope>
    <scope>CATALYTIC ACTIVITY</scope>
    <scope>SUBUNIT</scope>
    <scope>BIOPHYSICOCHEMICAL PROPERTIES</scope>
    <scope>MUTAGENESIS OF ASP-295; ASP-297; ASP-307; HIS-371; GLU-406 AND GLU-421</scope>
</reference>
<reference key="4">
    <citation type="journal article" date="2014" name="Biochemistry">
        <title>DddD is a CoA-transferase/lyase producing dimethyl sulfide in the marine environment.</title>
        <authorList>
            <person name="Alcolombri U."/>
            <person name="Laurino P."/>
            <person name="Lara-Astiaso P."/>
            <person name="Vardi A."/>
            <person name="Tawfik D.S."/>
        </authorList>
    </citation>
    <scope>DISCUSSION ON FUNCTION</scope>
</reference>
<name>DDDP_ROSNI</name>
<comment type="function">
    <text evidence="3 4 6">Able to cleave dimethylsulfoniopropionate (DMSP), releasing dimethyl sulfide (DMS). DMS is the principal form by which sulfur is transported from oceans to the atmosphere (PubMed:19220400, PubMed:20378650). The real activity of the protein is however subject to debate and it is unclear whether it constitutes a real dimethylsulfoniopropionate lyase in vivo: the low activity with DMSP as substrate suggests that DMSP is not its native substrate (PubMed:25140443).</text>
</comment>
<comment type="catalytic activity">
    <reaction evidence="4">
        <text>S,S-dimethyl-beta-propiothetin = acrylate + dimethyl sulfide + H(+)</text>
        <dbReference type="Rhea" id="RHEA:19965"/>
        <dbReference type="ChEBI" id="CHEBI:15378"/>
        <dbReference type="ChEBI" id="CHEBI:16457"/>
        <dbReference type="ChEBI" id="CHEBI:17437"/>
        <dbReference type="ChEBI" id="CHEBI:37080"/>
        <dbReference type="EC" id="4.4.1.3"/>
    </reaction>
</comment>
<comment type="cofactor">
    <cofactor evidence="1">
        <name>a divalent metal cation</name>
        <dbReference type="ChEBI" id="CHEBI:60240"/>
    </cofactor>
    <text evidence="1 4">According to a report, does not bind any metal ion as cofactor (PubMed:20378650). A crystal structure complexed with 2 Fe(2+) ions has however been observed for an ortholog, suggesting that it binds 2 divalent metal cation ions per subunit (By similarity).</text>
</comment>
<comment type="biophysicochemical properties">
    <kinetics>
        <KM evidence="4">13.8 mM for dimethylsulfoniopropionate</KM>
        <Vmax evidence="4">0.31 nmol/min/ug enzyme</Vmax>
    </kinetics>
    <phDependence>
        <text evidence="4">Optimum pH is 6.0.</text>
    </phDependence>
</comment>
<comment type="subunit">
    <text evidence="4">Homodimer.</text>
</comment>
<comment type="similarity">
    <text evidence="7">Belongs to the peptidase M24B family.</text>
</comment>
<organism>
    <name type="scientific">Roseovarius nubinhibens (strain ATCC BAA-591 / DSM 15170 / ISM)</name>
    <dbReference type="NCBI Taxonomy" id="89187"/>
    <lineage>
        <taxon>Bacteria</taxon>
        <taxon>Pseudomonadati</taxon>
        <taxon>Pseudomonadota</taxon>
        <taxon>Alphaproteobacteria</taxon>
        <taxon>Rhodobacterales</taxon>
        <taxon>Roseobacteraceae</taxon>
        <taxon>Roseovarius</taxon>
    </lineage>
</organism>
<gene>
    <name evidence="5" type="primary">dddP</name>
    <name evidence="8" type="ORF">ISM_05385</name>
</gene>
<evidence type="ECO:0000250" key="1">
    <source>
        <dbReference type="UniProtKB" id="Q166H0"/>
    </source>
</evidence>
<evidence type="ECO:0000256" key="2">
    <source>
        <dbReference type="SAM" id="MobiDB-lite"/>
    </source>
</evidence>
<evidence type="ECO:0000269" key="3">
    <source>
    </source>
</evidence>
<evidence type="ECO:0000269" key="4">
    <source>
    </source>
</evidence>
<evidence type="ECO:0000303" key="5">
    <source>
    </source>
</evidence>
<evidence type="ECO:0000303" key="6">
    <source>
    </source>
</evidence>
<evidence type="ECO:0000305" key="7"/>
<evidence type="ECO:0000312" key="8">
    <source>
        <dbReference type="EMBL" id="EAP77700.1"/>
    </source>
</evidence>
<feature type="chain" id="PRO_0000433896" description="Dimethylsulfoniopropionate lyase DddP">
    <location>
        <begin position="1"/>
        <end position="446"/>
    </location>
</feature>
<feature type="region of interest" description="Disordered" evidence="2">
    <location>
        <begin position="1"/>
        <end position="30"/>
    </location>
</feature>
<feature type="compositionally biased region" description="Basic and acidic residues" evidence="2">
    <location>
        <begin position="1"/>
        <end position="13"/>
    </location>
</feature>
<feature type="binding site" evidence="1">
    <location>
        <position position="295"/>
    </location>
    <ligand>
        <name>a divalent metal cation</name>
        <dbReference type="ChEBI" id="CHEBI:60240"/>
        <label>1</label>
    </ligand>
</feature>
<feature type="binding site" evidence="1">
    <location>
        <position position="297"/>
    </location>
    <ligand>
        <name>a divalent metal cation</name>
        <dbReference type="ChEBI" id="CHEBI:60240"/>
        <label>1</label>
    </ligand>
</feature>
<feature type="binding site" evidence="1">
    <location>
        <position position="307"/>
    </location>
    <ligand>
        <name>a divalent metal cation</name>
        <dbReference type="ChEBI" id="CHEBI:60240"/>
        <label>1</label>
    </ligand>
</feature>
<feature type="binding site" evidence="1">
    <location>
        <position position="307"/>
    </location>
    <ligand>
        <name>a divalent metal cation</name>
        <dbReference type="ChEBI" id="CHEBI:60240"/>
        <label>2</label>
    </ligand>
</feature>
<feature type="binding site" evidence="1">
    <location>
        <position position="371"/>
    </location>
    <ligand>
        <name>a divalent metal cation</name>
        <dbReference type="ChEBI" id="CHEBI:60240"/>
        <label>2</label>
    </ligand>
</feature>
<feature type="binding site" evidence="1">
    <location>
        <position position="406"/>
    </location>
    <ligand>
        <name>a divalent metal cation</name>
        <dbReference type="ChEBI" id="CHEBI:60240"/>
        <label>2</label>
    </ligand>
</feature>
<feature type="binding site" evidence="1">
    <location>
        <position position="421"/>
    </location>
    <ligand>
        <name>a divalent metal cation</name>
        <dbReference type="ChEBI" id="CHEBI:60240"/>
        <label>1</label>
    </ligand>
</feature>
<feature type="binding site" evidence="1">
    <location>
        <position position="421"/>
    </location>
    <ligand>
        <name>a divalent metal cation</name>
        <dbReference type="ChEBI" id="CHEBI:60240"/>
        <label>2</label>
    </ligand>
</feature>
<feature type="mutagenesis site" description="Unable to generate dimethyl sulfide (DMS) from dimethylsulfoniopropionate (DMSP)." evidence="4">
    <original>D</original>
    <variation>A</variation>
    <location>
        <position position="295"/>
    </location>
</feature>
<feature type="mutagenesis site" description="Unable to generate dimethyl sulfide (DMS) from dimethylsulfoniopropionate (DMSP)." evidence="4">
    <original>D</original>
    <variation>A</variation>
    <location>
        <position position="297"/>
    </location>
</feature>
<feature type="mutagenesis site" description="Unable to generate dimethyl sulfide (DMS) from dimethylsulfoniopropionate (DMSP)." evidence="4">
    <original>D</original>
    <variation>A</variation>
    <location>
        <position position="307"/>
    </location>
</feature>
<feature type="mutagenesis site" description="Unable to generate dimethyl sulfide (DMS) from dimethylsulfoniopropionate (DMSP)." evidence="4">
    <original>H</original>
    <variation>A</variation>
    <location>
        <position position="371"/>
    </location>
</feature>
<feature type="mutagenesis site" description="Unable to generate dimethyl sulfide (DMS) from dimethylsulfoniopropionate (DMSP)." evidence="4">
    <original>E</original>
    <variation>A</variation>
    <location>
        <position position="406"/>
    </location>
</feature>
<feature type="mutagenesis site" description="Unable to generate dimethyl sulfide (DMS) from dimethylsulfoniopropionate (DMSP)." evidence="4">
    <original>E</original>
    <variation>A</variation>
    <location>
        <position position="421"/>
    </location>
</feature>
<sequence>MNQHYSETRKIDPSRGATLGDNTPNDNNRIEIGPTQLAFGEWATAGLALPDLQRMREFRWNRLTQAVVDRDYGGVLMFDPLNIRYATDSTNMQLWNAHNPFRALLVCADGYMVIWDYKNSPFLSTFNPLVREQRFGADLFYFDRGDKVDVAADAFSNEVRTLIAEHGGGNMRLAVDKIMLHGLRALEAQGFEIMEGEELTEKTRAIKGPDEILAMRCAVHACETSVAAMEHFAREAVPQGNTSEDDVWAVLHAENIKRGGEWIETRLLASGPRTNPWFQECGPRIIQNNEIISFDTDLIGSYGICVDISRSWWVGDAAPPADMVYAMQHAHEHIMTNMEMLKPGVTIPELSERSHRLDEQFQAQKYGCLMHGVGLCDEWPLVAYPDQAVPGSYDYPLEPGMVLCVEAAVGAVGGNFTIKLEDQVLITETGYENLTSYPFDPALMGR</sequence>